<organism>
    <name type="scientific">Dictyostelium discoideum</name>
    <name type="common">Social amoeba</name>
    <dbReference type="NCBI Taxonomy" id="44689"/>
    <lineage>
        <taxon>Eukaryota</taxon>
        <taxon>Amoebozoa</taxon>
        <taxon>Evosea</taxon>
        <taxon>Eumycetozoa</taxon>
        <taxon>Dictyostelia</taxon>
        <taxon>Dictyosteliales</taxon>
        <taxon>Dictyosteliaceae</taxon>
        <taxon>Dictyostelium</taxon>
    </lineage>
</organism>
<keyword id="KW-0140">cGMP</keyword>
<keyword id="KW-0142">cGMP-binding</keyword>
<keyword id="KW-0344">Guanine-nucleotide releasing factor</keyword>
<keyword id="KW-0547">Nucleotide-binding</keyword>
<keyword id="KW-1185">Reference proteome</keyword>
<keyword id="KW-0677">Repeat</keyword>
<evidence type="ECO:0000250" key="1"/>
<evidence type="ECO:0000255" key="2">
    <source>
        <dbReference type="PROSITE-ProRule" id="PRU00135"/>
    </source>
</evidence>
<evidence type="ECO:0000255" key="3">
    <source>
        <dbReference type="PROSITE-ProRule" id="PRU00168"/>
    </source>
</evidence>
<evidence type="ECO:0000256" key="4">
    <source>
        <dbReference type="SAM" id="MobiDB-lite"/>
    </source>
</evidence>
<evidence type="ECO:0000269" key="5">
    <source>
    </source>
</evidence>
<evidence type="ECO:0000269" key="6">
    <source>
    </source>
</evidence>
<evidence type="ECO:0000269" key="7">
    <source>
    </source>
</evidence>
<evidence type="ECO:0000269" key="8">
    <source>
    </source>
</evidence>
<evidence type="ECO:0000305" key="9"/>
<name>GBPD_DICDI</name>
<protein>
    <recommendedName>
        <fullName>Cyclic GMP-binding protein D</fullName>
    </recommendedName>
    <alternativeName>
        <fullName>Guanine nucleotide exchange factor for rap1</fullName>
    </alternativeName>
    <alternativeName>
        <fullName>Ras guanine nucleotide exchange factor U</fullName>
    </alternativeName>
    <alternativeName>
        <fullName>RasGEF domain-containing protein U</fullName>
    </alternativeName>
</protein>
<gene>
    <name type="primary">gbpD</name>
    <name type="synonym">gefU</name>
    <name type="synonym">rapgef</name>
    <name type="ORF">DDB_G0282373</name>
</gene>
<proteinExistence type="evidence at transcript level"/>
<feature type="chain" id="PRO_0000353104" description="Cyclic GMP-binding protein D">
    <location>
        <begin position="1"/>
        <end position="1312"/>
    </location>
</feature>
<feature type="domain" description="N-terminal Ras-GEF" evidence="2">
    <location>
        <begin position="26"/>
        <end position="155"/>
    </location>
</feature>
<feature type="domain" description="Ras-GEF" evidence="3">
    <location>
        <begin position="353"/>
        <end position="582"/>
    </location>
</feature>
<feature type="domain" description="GRAM">
    <location>
        <begin position="940"/>
        <end position="1006"/>
    </location>
</feature>
<feature type="region of interest" description="Disordered" evidence="4">
    <location>
        <begin position="206"/>
        <end position="244"/>
    </location>
</feature>
<feature type="region of interest" description="Disordered" evidence="4">
    <location>
        <begin position="260"/>
        <end position="326"/>
    </location>
</feature>
<feature type="region of interest" description="Disordered" evidence="4">
    <location>
        <begin position="586"/>
        <end position="658"/>
    </location>
</feature>
<feature type="region of interest" description="Disordered" evidence="4">
    <location>
        <begin position="1059"/>
        <end position="1108"/>
    </location>
</feature>
<feature type="region of interest" description="Disordered" evidence="4">
    <location>
        <begin position="1167"/>
        <end position="1210"/>
    </location>
</feature>
<feature type="compositionally biased region" description="Low complexity" evidence="4">
    <location>
        <begin position="206"/>
        <end position="236"/>
    </location>
</feature>
<feature type="compositionally biased region" description="Low complexity" evidence="4">
    <location>
        <begin position="275"/>
        <end position="296"/>
    </location>
</feature>
<feature type="compositionally biased region" description="Polar residues" evidence="4">
    <location>
        <begin position="297"/>
        <end position="310"/>
    </location>
</feature>
<feature type="compositionally biased region" description="Low complexity" evidence="4">
    <location>
        <begin position="311"/>
        <end position="326"/>
    </location>
</feature>
<feature type="compositionally biased region" description="Low complexity" evidence="4">
    <location>
        <begin position="591"/>
        <end position="612"/>
    </location>
</feature>
<feature type="compositionally biased region" description="Gly residues" evidence="4">
    <location>
        <begin position="613"/>
        <end position="625"/>
    </location>
</feature>
<feature type="compositionally biased region" description="Basic and acidic residues" evidence="4">
    <location>
        <begin position="630"/>
        <end position="644"/>
    </location>
</feature>
<feature type="compositionally biased region" description="Low complexity" evidence="4">
    <location>
        <begin position="646"/>
        <end position="657"/>
    </location>
</feature>
<feature type="compositionally biased region" description="Low complexity" evidence="4">
    <location>
        <begin position="1059"/>
        <end position="1087"/>
    </location>
</feature>
<feature type="binding site">
    <location>
        <begin position="698"/>
        <end position="857"/>
    </location>
    <ligand>
        <name>a nucleoside 3',5'-cyclic phosphate</name>
        <dbReference type="ChEBI" id="CHEBI:58464"/>
        <label>1</label>
    </ligand>
</feature>
<feature type="binding site">
    <location>
        <begin position="1105"/>
        <end position="1218"/>
    </location>
    <ligand>
        <name>a nucleoside 3',5'-cyclic phosphate</name>
        <dbReference type="ChEBI" id="CHEBI:58464"/>
        <label>2</label>
    </ligand>
</feature>
<feature type="binding site">
    <location>
        <begin position="1182"/>
        <end position="1303"/>
    </location>
    <ligand>
        <name>a nucleoside 3',5'-cyclic phosphate</name>
        <dbReference type="ChEBI" id="CHEBI:58464"/>
        <label>3</label>
    </ligand>
</feature>
<feature type="sequence conflict" description="In Ref. 1; AAM34042." evidence="9" ref="1">
    <original>G</original>
    <variation>A</variation>
    <location>
        <position position="621"/>
    </location>
</feature>
<reference key="1">
    <citation type="journal article" date="2002" name="Proc. Natl. Acad. Sci. U.S.A.">
        <title>Identification of four candidate cGMP targets in Dictyostelium.</title>
        <authorList>
            <person name="Goldberg J.M."/>
            <person name="Bosgraaf L."/>
            <person name="Van Haastert P.J.M."/>
            <person name="Smith J.L."/>
        </authorList>
    </citation>
    <scope>NUCLEOTIDE SEQUENCE [GENOMIC DNA]</scope>
    <scope>DEVELOPMENTAL STAGE</scope>
</reference>
<reference key="2">
    <citation type="journal article" date="2005" name="Nature">
        <title>The genome of the social amoeba Dictyostelium discoideum.</title>
        <authorList>
            <person name="Eichinger L."/>
            <person name="Pachebat J.A."/>
            <person name="Gloeckner G."/>
            <person name="Rajandream M.A."/>
            <person name="Sucgang R."/>
            <person name="Berriman M."/>
            <person name="Song J."/>
            <person name="Olsen R."/>
            <person name="Szafranski K."/>
            <person name="Xu Q."/>
            <person name="Tunggal B."/>
            <person name="Kummerfeld S."/>
            <person name="Madera M."/>
            <person name="Konfortov B.A."/>
            <person name="Rivero F."/>
            <person name="Bankier A.T."/>
            <person name="Lehmann R."/>
            <person name="Hamlin N."/>
            <person name="Davies R."/>
            <person name="Gaudet P."/>
            <person name="Fey P."/>
            <person name="Pilcher K."/>
            <person name="Chen G."/>
            <person name="Saunders D."/>
            <person name="Sodergren E.J."/>
            <person name="Davis P."/>
            <person name="Kerhornou A."/>
            <person name="Nie X."/>
            <person name="Hall N."/>
            <person name="Anjard C."/>
            <person name="Hemphill L."/>
            <person name="Bason N."/>
            <person name="Farbrother P."/>
            <person name="Desany B."/>
            <person name="Just E."/>
            <person name="Morio T."/>
            <person name="Rost R."/>
            <person name="Churcher C.M."/>
            <person name="Cooper J."/>
            <person name="Haydock S."/>
            <person name="van Driessche N."/>
            <person name="Cronin A."/>
            <person name="Goodhead I."/>
            <person name="Muzny D.M."/>
            <person name="Mourier T."/>
            <person name="Pain A."/>
            <person name="Lu M."/>
            <person name="Harper D."/>
            <person name="Lindsay R."/>
            <person name="Hauser H."/>
            <person name="James K.D."/>
            <person name="Quiles M."/>
            <person name="Madan Babu M."/>
            <person name="Saito T."/>
            <person name="Buchrieser C."/>
            <person name="Wardroper A."/>
            <person name="Felder M."/>
            <person name="Thangavelu M."/>
            <person name="Johnson D."/>
            <person name="Knights A."/>
            <person name="Loulseged H."/>
            <person name="Mungall K.L."/>
            <person name="Oliver K."/>
            <person name="Price C."/>
            <person name="Quail M.A."/>
            <person name="Urushihara H."/>
            <person name="Hernandez J."/>
            <person name="Rabbinowitsch E."/>
            <person name="Steffen D."/>
            <person name="Sanders M."/>
            <person name="Ma J."/>
            <person name="Kohara Y."/>
            <person name="Sharp S."/>
            <person name="Simmonds M.N."/>
            <person name="Spiegler S."/>
            <person name="Tivey A."/>
            <person name="Sugano S."/>
            <person name="White B."/>
            <person name="Walker D."/>
            <person name="Woodward J.R."/>
            <person name="Winckler T."/>
            <person name="Tanaka Y."/>
            <person name="Shaulsky G."/>
            <person name="Schleicher M."/>
            <person name="Weinstock G.M."/>
            <person name="Rosenthal A."/>
            <person name="Cox E.C."/>
            <person name="Chisholm R.L."/>
            <person name="Gibbs R.A."/>
            <person name="Loomis W.F."/>
            <person name="Platzer M."/>
            <person name="Kay R.R."/>
            <person name="Williams J.G."/>
            <person name="Dear P.H."/>
            <person name="Noegel A.A."/>
            <person name="Barrell B.G."/>
            <person name="Kuspa A."/>
        </authorList>
    </citation>
    <scope>NUCLEOTIDE SEQUENCE [LARGE SCALE GENOMIC DNA]</scope>
    <source>
        <strain>AX4</strain>
    </source>
</reference>
<reference key="3">
    <citation type="journal article" date="2002" name="EMBO J.">
        <title>A novel cGMP signalling pathway mediating myosin phosphorylation and chemotaxis in Dictyostelium.</title>
        <authorList>
            <person name="Bosgraaf L."/>
            <person name="Russcher H."/>
            <person name="Smith J.L."/>
            <person name="Wessels D."/>
            <person name="Soll D.R."/>
            <person name="Van Haastert P.J.M."/>
        </authorList>
    </citation>
    <scope>FUNCTION</scope>
</reference>
<reference key="4">
    <citation type="journal article" date="2005" name="Genome Biol.">
        <title>The Dictyostelium genome encodes numerous RasGEFs with multiple biological roles.</title>
        <authorList>
            <person name="Wilkins A."/>
            <person name="Szafranski K."/>
            <person name="Fraser D.J."/>
            <person name="Bakthavatsalam D."/>
            <person name="Mueller R."/>
            <person name="Fisher P.R."/>
            <person name="Gloeckner G."/>
            <person name="Eichinger L."/>
            <person name="Noegel A.A."/>
            <person name="Insall R.H."/>
        </authorList>
    </citation>
    <scope>DEVELOPMENTAL STAGE</scope>
</reference>
<reference key="5">
    <citation type="journal article" date="2005" name="J. Cell Sci.">
        <title>RasGEF-containing proteins GbpC and GbpD have differential effects on cell polarity and chemotaxis in Dictyostelium.</title>
        <authorList>
            <person name="Bosgraaf L."/>
            <person name="Waijer A."/>
            <person name="Engel R."/>
            <person name="Visser A.J.W.G."/>
            <person name="Wessels D."/>
            <person name="Soll D."/>
            <person name="van Haastert P.J.M."/>
        </authorList>
    </citation>
    <scope>FUNCTION</scope>
</reference>
<sequence length="1312" mass="143659">MTDYPFYKPDDETNIIYNININKKEGFSAIKSCSLAKLIEKLTSTKQLHTYFSSAFFLTYRDFTTPLEIINLLISRYTGPPPDSSKDSLRLFEIEVDIVQANVLSIFRTLIGTLIQVDFDTPKLSSSIIEFFNSLPESVKNELFLEFFKAKKMARPPGSIPKPVNSNIISSAASTMRFSYSVSPKTQSPNSTNNVLSGLLSNNGSNTMNGINGTSNNNVNSNNNNNNGTTNISSPNFDPSRSSMKMGKGIMKLLQSNIANFNNQQNGGGGGGSNNGTSPQSSPSSTLSSTNSLFNQQPSLSMLNDDGSVQNNNNNNNNNNNNNNVNEISTINVQLPPSTPPINGIPGEKTAFLPEAIAKELTIMEWELITALSVSDITSKEWNKSVNIQNLTTWFNRISSWVSTKIISKETPEERAIIIEAFINIANFAKELKNYNCVMEILGSLHGSSISRLKSSWALLSQKTNDMFQILNNLMTTDGNFKNYRKILTTVLPNEPCIPYLGLFLTDYTYLDESNPSLSTDSNLINIDRIFLISTRVQEFFQLFTNCNYTFISNMSVRDAILGEKVWDENEIFRLSKIREETSSLQSLKESNGIGNSNSTSGGSSSSLVNKDGSGGGGGSGGGGSVNSKGDGKGDGKDNRDGRGDGNSNCGNGSGISSKDKDLLLSSSSSAASHTVRRKNFVTKYRMSFTGNDPLPSVSSTLSEREWKILTTNSKTIIYPRGKTVLSVGETNTNIYRVISGRVKVETLKSFNSSDADLGAGGGGGGDNRGEDNSLMAIKARNRLSLNLPAQDDGYYVEEGEIFGQESFLYTDRPMLSNIIVDSGECELMEIEKSFVLQLFASEHQLSATFYKFIGVIQAQLLKSIYINFTSNYGNGGSGGSGSNGNGGGSSNGAGGGGLSSSVSIGNLNSPNINRIDFKRRSTIFETPSSLDILRDGNDSSFRTKFGLSQDEVIIKRYQCKHNNMNGTLYITKHNLCFEGKFLGINKNKTIPFDRTDKILTVDKNIMTVTTKEKVKKFTFKSHDDLNEGYGISVQIWANHLNINVKQQLQLQQQQLQQQQQQPSQQPSQQQSQSSQLQQSVSASSTTPPVPNSPKVGRGESFSNIKDLPSKDEWNQILKGTKPLTFKKGEILICEGVEYQKMFQIVKGECSVVKSLLPTPLDQNIFNNINNNNNNNNNNNNNNNNNNNNNNNNNNNGNNNNSIFKNNSSISNTNSNTSIDGGVGGGLSPQTLVDPKNSVIVSKLTHGSIFGEMSFLLPGGSATSLVVSSDEVEVYIIESYFLHILLKSKPYLASKFYKYLACVLETRVRNLT</sequence>
<dbReference type="EMBL" id="AF481924">
    <property type="protein sequence ID" value="AAM34042.1"/>
    <property type="molecule type" value="Genomic_DNA"/>
</dbReference>
<dbReference type="EMBL" id="AAFI02000047">
    <property type="protein sequence ID" value="EAL66046.1"/>
    <property type="molecule type" value="Genomic_DNA"/>
</dbReference>
<dbReference type="RefSeq" id="XP_640199.1">
    <property type="nucleotide sequence ID" value="XM_635107.1"/>
</dbReference>
<dbReference type="FunCoup" id="Q54S40">
    <property type="interactions" value="79"/>
</dbReference>
<dbReference type="STRING" id="44689.Q54S40"/>
<dbReference type="PaxDb" id="44689-DDB0215332"/>
<dbReference type="EnsemblProtists" id="EAL66046">
    <property type="protein sequence ID" value="EAL66046"/>
    <property type="gene ID" value="DDB_G0282373"/>
</dbReference>
<dbReference type="GeneID" id="8623739"/>
<dbReference type="KEGG" id="ddi:DDB_G0282373"/>
<dbReference type="dictyBase" id="DDB_G0282373">
    <property type="gene designation" value="gbpD"/>
</dbReference>
<dbReference type="VEuPathDB" id="AmoebaDB:DDB_G0282373"/>
<dbReference type="eggNOG" id="KOG3417">
    <property type="taxonomic scope" value="Eukaryota"/>
</dbReference>
<dbReference type="HOGENOM" id="CLU_260634_0_0_1"/>
<dbReference type="InParanoid" id="Q54S40"/>
<dbReference type="OMA" id="WFNRISS"/>
<dbReference type="PRO" id="PR:Q54S40"/>
<dbReference type="Proteomes" id="UP000002195">
    <property type="component" value="Chromosome 3"/>
</dbReference>
<dbReference type="GO" id="GO:0005886">
    <property type="term" value="C:plasma membrane"/>
    <property type="evidence" value="ECO:0000314"/>
    <property type="project" value="dictyBase"/>
</dbReference>
<dbReference type="GO" id="GO:0030553">
    <property type="term" value="F:cGMP binding"/>
    <property type="evidence" value="ECO:0007669"/>
    <property type="project" value="UniProtKB-KW"/>
</dbReference>
<dbReference type="GO" id="GO:0005085">
    <property type="term" value="F:guanyl-nucleotide exchange factor activity"/>
    <property type="evidence" value="ECO:0000314"/>
    <property type="project" value="dictyBase"/>
</dbReference>
<dbReference type="GO" id="GO:0032060">
    <property type="term" value="P:bleb assembly"/>
    <property type="evidence" value="ECO:0000316"/>
    <property type="project" value="dictyBase"/>
</dbReference>
<dbReference type="GO" id="GO:0031589">
    <property type="term" value="P:cell-substrate adhesion"/>
    <property type="evidence" value="ECO:0000315"/>
    <property type="project" value="dictyBase"/>
</dbReference>
<dbReference type="GO" id="GO:0019934">
    <property type="term" value="P:cGMP-mediated signaling"/>
    <property type="evidence" value="ECO:0000316"/>
    <property type="project" value="dictyBase"/>
</dbReference>
<dbReference type="GO" id="GO:0007163">
    <property type="term" value="P:establishment or maintenance of cell polarity"/>
    <property type="evidence" value="ECO:0000315"/>
    <property type="project" value="dictyBase"/>
</dbReference>
<dbReference type="GO" id="GO:0031271">
    <property type="term" value="P:lateral pseudopodium assembly"/>
    <property type="evidence" value="ECO:0000315"/>
    <property type="project" value="dictyBase"/>
</dbReference>
<dbReference type="GO" id="GO:0007265">
    <property type="term" value="P:Ras protein signal transduction"/>
    <property type="evidence" value="ECO:0000318"/>
    <property type="project" value="GO_Central"/>
</dbReference>
<dbReference type="GO" id="GO:2000145">
    <property type="term" value="P:regulation of cell motility"/>
    <property type="evidence" value="ECO:0000316"/>
    <property type="project" value="dictyBase"/>
</dbReference>
<dbReference type="GO" id="GO:0010810">
    <property type="term" value="P:regulation of cell-substrate adhesion"/>
    <property type="evidence" value="ECO:0000315"/>
    <property type="project" value="dictyBase"/>
</dbReference>
<dbReference type="GO" id="GO:0050920">
    <property type="term" value="P:regulation of chemotaxis"/>
    <property type="evidence" value="ECO:0000315"/>
    <property type="project" value="dictyBase"/>
</dbReference>
<dbReference type="GO" id="GO:0031272">
    <property type="term" value="P:regulation of pseudopodium assembly"/>
    <property type="evidence" value="ECO:0000315"/>
    <property type="project" value="dictyBase"/>
</dbReference>
<dbReference type="CDD" id="cd00155">
    <property type="entry name" value="RasGEF"/>
    <property type="match status" value="1"/>
</dbReference>
<dbReference type="CDD" id="cd06224">
    <property type="entry name" value="REM"/>
    <property type="match status" value="1"/>
</dbReference>
<dbReference type="Gene3D" id="2.60.120.10">
    <property type="entry name" value="Jelly Rolls"/>
    <property type="match status" value="2"/>
</dbReference>
<dbReference type="Gene3D" id="2.30.29.30">
    <property type="entry name" value="Pleckstrin-homology domain (PH domain)/Phosphotyrosine-binding domain (PTB)"/>
    <property type="match status" value="1"/>
</dbReference>
<dbReference type="Gene3D" id="1.10.840.10">
    <property type="entry name" value="Ras guanine-nucleotide exchange factors catalytic domain"/>
    <property type="match status" value="1"/>
</dbReference>
<dbReference type="Gene3D" id="1.20.870.10">
    <property type="entry name" value="Son of sevenless (SoS) protein Chain: S domain 1"/>
    <property type="match status" value="1"/>
</dbReference>
<dbReference type="InterPro" id="IPR000595">
    <property type="entry name" value="cNMP-bd_dom"/>
</dbReference>
<dbReference type="InterPro" id="IPR018490">
    <property type="entry name" value="cNMP-bd_dom_sf"/>
</dbReference>
<dbReference type="InterPro" id="IPR004182">
    <property type="entry name" value="GRAM"/>
</dbReference>
<dbReference type="InterPro" id="IPR011993">
    <property type="entry name" value="PH-like_dom_sf"/>
</dbReference>
<dbReference type="InterPro" id="IPR008937">
    <property type="entry name" value="Ras-like_GEF"/>
</dbReference>
<dbReference type="InterPro" id="IPR000651">
    <property type="entry name" value="Ras-like_Gua-exchang_fac_N"/>
</dbReference>
<dbReference type="InterPro" id="IPR023578">
    <property type="entry name" value="Ras_GEF_dom_sf"/>
</dbReference>
<dbReference type="InterPro" id="IPR001895">
    <property type="entry name" value="RASGEF_cat_dom"/>
</dbReference>
<dbReference type="InterPro" id="IPR036964">
    <property type="entry name" value="RASGEF_cat_dom_sf"/>
</dbReference>
<dbReference type="InterPro" id="IPR014710">
    <property type="entry name" value="RmlC-like_jellyroll"/>
</dbReference>
<dbReference type="PANTHER" id="PTHR23113:SF254">
    <property type="entry name" value="CYCLIC GMP-BINDING PROTEIN D"/>
    <property type="match status" value="1"/>
</dbReference>
<dbReference type="PANTHER" id="PTHR23113">
    <property type="entry name" value="GUANINE NUCLEOTIDE EXCHANGE FACTOR"/>
    <property type="match status" value="1"/>
</dbReference>
<dbReference type="Pfam" id="PF02893">
    <property type="entry name" value="GRAM"/>
    <property type="match status" value="1"/>
</dbReference>
<dbReference type="Pfam" id="PF00617">
    <property type="entry name" value="RasGEF"/>
    <property type="match status" value="1"/>
</dbReference>
<dbReference type="Pfam" id="PF00618">
    <property type="entry name" value="RasGEF_N"/>
    <property type="match status" value="1"/>
</dbReference>
<dbReference type="SMART" id="SM00568">
    <property type="entry name" value="GRAM"/>
    <property type="match status" value="1"/>
</dbReference>
<dbReference type="SMART" id="SM00147">
    <property type="entry name" value="RasGEF"/>
    <property type="match status" value="1"/>
</dbReference>
<dbReference type="SMART" id="SM00229">
    <property type="entry name" value="RasGEFN"/>
    <property type="match status" value="1"/>
</dbReference>
<dbReference type="SUPFAM" id="SSF51206">
    <property type="entry name" value="cAMP-binding domain-like"/>
    <property type="match status" value="2"/>
</dbReference>
<dbReference type="SUPFAM" id="SSF48366">
    <property type="entry name" value="Ras GEF"/>
    <property type="match status" value="1"/>
</dbReference>
<dbReference type="PROSITE" id="PS50042">
    <property type="entry name" value="CNMP_BINDING_3"/>
    <property type="match status" value="2"/>
</dbReference>
<dbReference type="PROSITE" id="PS50009">
    <property type="entry name" value="RASGEF_CAT"/>
    <property type="match status" value="1"/>
</dbReference>
<dbReference type="PROSITE" id="PS50212">
    <property type="entry name" value="RASGEF_NTER"/>
    <property type="match status" value="1"/>
</dbReference>
<comment type="function">
    <text evidence="1 6 7">Promotes the exchange of Ras-bound GDP by GTP (By similarity). Induces the formation of substrate-attached pseudopodia, that leads to increased adhesion and thereby negatively influencing cell speed and polarity.</text>
</comment>
<comment type="developmental stage">
    <text evidence="5 8">Increases after starvation is initiated with a peak between 8-12 hours of starvation.</text>
</comment>
<accession>Q54S40</accession>
<accession>Q8MVR0</accession>